<dbReference type="EC" id="2.1.1.163" evidence="1"/>
<dbReference type="EC" id="2.1.1.201" evidence="1"/>
<dbReference type="EMBL" id="AE007869">
    <property type="protein sequence ID" value="AAK86136.2"/>
    <property type="status" value="ALT_INIT"/>
    <property type="molecule type" value="Genomic_DNA"/>
</dbReference>
<dbReference type="PIR" id="AH2615">
    <property type="entry name" value="AH2615"/>
</dbReference>
<dbReference type="PIR" id="G97397">
    <property type="entry name" value="G97397"/>
</dbReference>
<dbReference type="RefSeq" id="NP_353351.2">
    <property type="nucleotide sequence ID" value="NC_003062.2"/>
</dbReference>
<dbReference type="RefSeq" id="WP_006310167.1">
    <property type="nucleotide sequence ID" value="NC_003062.2"/>
</dbReference>
<dbReference type="SMR" id="Q8UIH5"/>
<dbReference type="STRING" id="176299.Atu0320"/>
<dbReference type="EnsemblBacteria" id="AAK86136">
    <property type="protein sequence ID" value="AAK86136"/>
    <property type="gene ID" value="Atu0320"/>
</dbReference>
<dbReference type="GeneID" id="1132358"/>
<dbReference type="KEGG" id="atu:Atu0320"/>
<dbReference type="PATRIC" id="fig|176299.10.peg.312"/>
<dbReference type="eggNOG" id="COG2226">
    <property type="taxonomic scope" value="Bacteria"/>
</dbReference>
<dbReference type="HOGENOM" id="CLU_037990_0_1_5"/>
<dbReference type="OrthoDB" id="9808140at2"/>
<dbReference type="UniPathway" id="UPA00079">
    <property type="reaction ID" value="UER00169"/>
</dbReference>
<dbReference type="UniPathway" id="UPA00232"/>
<dbReference type="Proteomes" id="UP000000813">
    <property type="component" value="Chromosome circular"/>
</dbReference>
<dbReference type="GO" id="GO:0008425">
    <property type="term" value="F:2-methoxy-6-polyprenyl-1,4-benzoquinol methyltransferase activity"/>
    <property type="evidence" value="ECO:0007669"/>
    <property type="project" value="UniProtKB-UniRule"/>
</dbReference>
<dbReference type="GO" id="GO:0043770">
    <property type="term" value="F:demethylmenaquinone methyltransferase activity"/>
    <property type="evidence" value="ECO:0007669"/>
    <property type="project" value="UniProtKB-UniRule"/>
</dbReference>
<dbReference type="GO" id="GO:0009060">
    <property type="term" value="P:aerobic respiration"/>
    <property type="evidence" value="ECO:0007669"/>
    <property type="project" value="UniProtKB-UniRule"/>
</dbReference>
<dbReference type="GO" id="GO:0009234">
    <property type="term" value="P:menaquinone biosynthetic process"/>
    <property type="evidence" value="ECO:0007669"/>
    <property type="project" value="UniProtKB-UniRule"/>
</dbReference>
<dbReference type="GO" id="GO:0032259">
    <property type="term" value="P:methylation"/>
    <property type="evidence" value="ECO:0007669"/>
    <property type="project" value="UniProtKB-KW"/>
</dbReference>
<dbReference type="CDD" id="cd02440">
    <property type="entry name" value="AdoMet_MTases"/>
    <property type="match status" value="1"/>
</dbReference>
<dbReference type="FunFam" id="3.40.50.150:FF:000064">
    <property type="entry name" value="2-methoxy-6-polyprenyl-1,4-benzoquinol methylase, mitochondrial"/>
    <property type="match status" value="1"/>
</dbReference>
<dbReference type="Gene3D" id="3.40.50.150">
    <property type="entry name" value="Vaccinia Virus protein VP39"/>
    <property type="match status" value="1"/>
</dbReference>
<dbReference type="HAMAP" id="MF_01813">
    <property type="entry name" value="MenG_UbiE_methyltr"/>
    <property type="match status" value="1"/>
</dbReference>
<dbReference type="InterPro" id="IPR029063">
    <property type="entry name" value="SAM-dependent_MTases_sf"/>
</dbReference>
<dbReference type="InterPro" id="IPR004033">
    <property type="entry name" value="UbiE/COQ5_MeTrFase"/>
</dbReference>
<dbReference type="InterPro" id="IPR023576">
    <property type="entry name" value="UbiE/COQ5_MeTrFase_CS"/>
</dbReference>
<dbReference type="NCBIfam" id="TIGR01934">
    <property type="entry name" value="MenG_MenH_UbiE"/>
    <property type="match status" value="1"/>
</dbReference>
<dbReference type="NCBIfam" id="NF001242">
    <property type="entry name" value="PRK00216.1-3"/>
    <property type="match status" value="1"/>
</dbReference>
<dbReference type="NCBIfam" id="NF001244">
    <property type="entry name" value="PRK00216.1-5"/>
    <property type="match status" value="1"/>
</dbReference>
<dbReference type="PANTHER" id="PTHR43591:SF24">
    <property type="entry name" value="2-METHOXY-6-POLYPRENYL-1,4-BENZOQUINOL METHYLASE, MITOCHONDRIAL"/>
    <property type="match status" value="1"/>
</dbReference>
<dbReference type="PANTHER" id="PTHR43591">
    <property type="entry name" value="METHYLTRANSFERASE"/>
    <property type="match status" value="1"/>
</dbReference>
<dbReference type="Pfam" id="PF01209">
    <property type="entry name" value="Ubie_methyltran"/>
    <property type="match status" value="1"/>
</dbReference>
<dbReference type="SUPFAM" id="SSF53335">
    <property type="entry name" value="S-adenosyl-L-methionine-dependent methyltransferases"/>
    <property type="match status" value="1"/>
</dbReference>
<dbReference type="PROSITE" id="PS51608">
    <property type="entry name" value="SAM_MT_UBIE"/>
    <property type="match status" value="1"/>
</dbReference>
<dbReference type="PROSITE" id="PS01183">
    <property type="entry name" value="UBIE_1"/>
    <property type="match status" value="1"/>
</dbReference>
<dbReference type="PROSITE" id="PS01184">
    <property type="entry name" value="UBIE_2"/>
    <property type="match status" value="1"/>
</dbReference>
<evidence type="ECO:0000255" key="1">
    <source>
        <dbReference type="HAMAP-Rule" id="MF_01813"/>
    </source>
</evidence>
<evidence type="ECO:0000305" key="2"/>
<organism>
    <name type="scientific">Agrobacterium fabrum (strain C58 / ATCC 33970)</name>
    <name type="common">Agrobacterium tumefaciens (strain C58)</name>
    <dbReference type="NCBI Taxonomy" id="176299"/>
    <lineage>
        <taxon>Bacteria</taxon>
        <taxon>Pseudomonadati</taxon>
        <taxon>Pseudomonadota</taxon>
        <taxon>Alphaproteobacteria</taxon>
        <taxon>Hyphomicrobiales</taxon>
        <taxon>Rhizobiaceae</taxon>
        <taxon>Rhizobium/Agrobacterium group</taxon>
        <taxon>Agrobacterium</taxon>
        <taxon>Agrobacterium tumefaciens complex</taxon>
    </lineage>
</organism>
<comment type="function">
    <text evidence="1">Methyltransferase required for the conversion of demethylmenaquinol (DMKH2) to menaquinol (MKH2) and the conversion of 2-polyprenyl-6-methoxy-1,4-benzoquinol (DDMQH2) to 2-polyprenyl-3-methyl-6-methoxy-1,4-benzoquinol (DMQH2).</text>
</comment>
<comment type="catalytic activity">
    <reaction evidence="1">
        <text>a 2-demethylmenaquinol + S-adenosyl-L-methionine = a menaquinol + S-adenosyl-L-homocysteine + H(+)</text>
        <dbReference type="Rhea" id="RHEA:42640"/>
        <dbReference type="Rhea" id="RHEA-COMP:9539"/>
        <dbReference type="Rhea" id="RHEA-COMP:9563"/>
        <dbReference type="ChEBI" id="CHEBI:15378"/>
        <dbReference type="ChEBI" id="CHEBI:18151"/>
        <dbReference type="ChEBI" id="CHEBI:55437"/>
        <dbReference type="ChEBI" id="CHEBI:57856"/>
        <dbReference type="ChEBI" id="CHEBI:59789"/>
        <dbReference type="EC" id="2.1.1.163"/>
    </reaction>
</comment>
<comment type="catalytic activity">
    <reaction evidence="1">
        <text>a 2-methoxy-6-(all-trans-polyprenyl)benzene-1,4-diol + S-adenosyl-L-methionine = a 5-methoxy-2-methyl-3-(all-trans-polyprenyl)benzene-1,4-diol + S-adenosyl-L-homocysteine + H(+)</text>
        <dbReference type="Rhea" id="RHEA:28286"/>
        <dbReference type="Rhea" id="RHEA-COMP:10858"/>
        <dbReference type="Rhea" id="RHEA-COMP:10859"/>
        <dbReference type="ChEBI" id="CHEBI:15378"/>
        <dbReference type="ChEBI" id="CHEBI:57856"/>
        <dbReference type="ChEBI" id="CHEBI:59789"/>
        <dbReference type="ChEBI" id="CHEBI:84166"/>
        <dbReference type="ChEBI" id="CHEBI:84167"/>
        <dbReference type="EC" id="2.1.1.201"/>
    </reaction>
</comment>
<comment type="pathway">
    <text evidence="1">Quinol/quinone metabolism; menaquinone biosynthesis; menaquinol from 1,4-dihydroxy-2-naphthoate: step 2/2.</text>
</comment>
<comment type="pathway">
    <text evidence="1">Cofactor biosynthesis; ubiquinone biosynthesis.</text>
</comment>
<comment type="similarity">
    <text evidence="1">Belongs to the class I-like SAM-binding methyltransferase superfamily. MenG/UbiE family.</text>
</comment>
<comment type="sequence caution" evidence="2">
    <conflict type="erroneous initiation">
        <sequence resource="EMBL-CDS" id="AAK86136"/>
    </conflict>
</comment>
<gene>
    <name evidence="1" type="primary">ubiE</name>
    <name type="ordered locus">Atu0320</name>
    <name type="ORF">AGR_C_559</name>
</gene>
<accession>Q8UIH5</accession>
<feature type="chain" id="PRO_0000193235" description="Ubiquinone/menaquinone biosynthesis C-methyltransferase UbiE">
    <location>
        <begin position="1"/>
        <end position="259"/>
    </location>
</feature>
<feature type="binding site" evidence="1">
    <location>
        <position position="82"/>
    </location>
    <ligand>
        <name>S-adenosyl-L-methionine</name>
        <dbReference type="ChEBI" id="CHEBI:59789"/>
    </ligand>
</feature>
<feature type="binding site" evidence="1">
    <location>
        <position position="103"/>
    </location>
    <ligand>
        <name>S-adenosyl-L-methionine</name>
        <dbReference type="ChEBI" id="CHEBI:59789"/>
    </ligand>
</feature>
<feature type="binding site" evidence="1">
    <location>
        <begin position="131"/>
        <end position="132"/>
    </location>
    <ligand>
        <name>S-adenosyl-L-methionine</name>
        <dbReference type="ChEBI" id="CHEBI:59789"/>
    </ligand>
</feature>
<proteinExistence type="inferred from homology"/>
<sequence length="259" mass="28862">MMTDARTTAEGGMETSYGFHKVDEGKKQGLVNEVFHKVAKRYDIMNDVMSAGLHRLWKDAMVSALSPRKDPSYKILDVAGGTGDVAFRIIEASNRLAHATVLDINGSMLAVGEERAAKKKLSDNLTFVEANAEELPFEANTFDAYTVAFGIRNVPRIDVALKEAYRVLKRGGRLLVLEFSEVDMPLLDRVYDAWSFNAIPQFGKMITGDAEPYQYLVESIRKFPNQEDFATMIRTAGFSRVTYTNYTGGIAALHSGWKL</sequence>
<reference key="1">
    <citation type="journal article" date="2001" name="Science">
        <title>The genome of the natural genetic engineer Agrobacterium tumefaciens C58.</title>
        <authorList>
            <person name="Wood D.W."/>
            <person name="Setubal J.C."/>
            <person name="Kaul R."/>
            <person name="Monks D.E."/>
            <person name="Kitajima J.P."/>
            <person name="Okura V.K."/>
            <person name="Zhou Y."/>
            <person name="Chen L."/>
            <person name="Wood G.E."/>
            <person name="Almeida N.F. Jr."/>
            <person name="Woo L."/>
            <person name="Chen Y."/>
            <person name="Paulsen I.T."/>
            <person name="Eisen J.A."/>
            <person name="Karp P.D."/>
            <person name="Bovee D. Sr."/>
            <person name="Chapman P."/>
            <person name="Clendenning J."/>
            <person name="Deatherage G."/>
            <person name="Gillet W."/>
            <person name="Grant C."/>
            <person name="Kutyavin T."/>
            <person name="Levy R."/>
            <person name="Li M.-J."/>
            <person name="McClelland E."/>
            <person name="Palmieri A."/>
            <person name="Raymond C."/>
            <person name="Rouse G."/>
            <person name="Saenphimmachak C."/>
            <person name="Wu Z."/>
            <person name="Romero P."/>
            <person name="Gordon D."/>
            <person name="Zhang S."/>
            <person name="Yoo H."/>
            <person name="Tao Y."/>
            <person name="Biddle P."/>
            <person name="Jung M."/>
            <person name="Krespan W."/>
            <person name="Perry M."/>
            <person name="Gordon-Kamm B."/>
            <person name="Liao L."/>
            <person name="Kim S."/>
            <person name="Hendrick C."/>
            <person name="Zhao Z.-Y."/>
            <person name="Dolan M."/>
            <person name="Chumley F."/>
            <person name="Tingey S.V."/>
            <person name="Tomb J.-F."/>
            <person name="Gordon M.P."/>
            <person name="Olson M.V."/>
            <person name="Nester E.W."/>
        </authorList>
    </citation>
    <scope>NUCLEOTIDE SEQUENCE [LARGE SCALE GENOMIC DNA]</scope>
    <source>
        <strain>C58 / ATCC 33970</strain>
    </source>
</reference>
<reference key="2">
    <citation type="journal article" date="2001" name="Science">
        <title>Genome sequence of the plant pathogen and biotechnology agent Agrobacterium tumefaciens C58.</title>
        <authorList>
            <person name="Goodner B."/>
            <person name="Hinkle G."/>
            <person name="Gattung S."/>
            <person name="Miller N."/>
            <person name="Blanchard M."/>
            <person name="Qurollo B."/>
            <person name="Goldman B.S."/>
            <person name="Cao Y."/>
            <person name="Askenazi M."/>
            <person name="Halling C."/>
            <person name="Mullin L."/>
            <person name="Houmiel K."/>
            <person name="Gordon J."/>
            <person name="Vaudin M."/>
            <person name="Iartchouk O."/>
            <person name="Epp A."/>
            <person name="Liu F."/>
            <person name="Wollam C."/>
            <person name="Allinger M."/>
            <person name="Doughty D."/>
            <person name="Scott C."/>
            <person name="Lappas C."/>
            <person name="Markelz B."/>
            <person name="Flanagan C."/>
            <person name="Crowell C."/>
            <person name="Gurson J."/>
            <person name="Lomo C."/>
            <person name="Sear C."/>
            <person name="Strub G."/>
            <person name="Cielo C."/>
            <person name="Slater S."/>
        </authorList>
    </citation>
    <scope>NUCLEOTIDE SEQUENCE [LARGE SCALE GENOMIC DNA]</scope>
    <source>
        <strain>C58 / ATCC 33970</strain>
    </source>
</reference>
<keyword id="KW-0474">Menaquinone biosynthesis</keyword>
<keyword id="KW-0489">Methyltransferase</keyword>
<keyword id="KW-1185">Reference proteome</keyword>
<keyword id="KW-0949">S-adenosyl-L-methionine</keyword>
<keyword id="KW-0808">Transferase</keyword>
<keyword id="KW-0831">Ubiquinone biosynthesis</keyword>
<protein>
    <recommendedName>
        <fullName evidence="1">Ubiquinone/menaquinone biosynthesis C-methyltransferase UbiE</fullName>
        <ecNumber evidence="1">2.1.1.163</ecNumber>
        <ecNumber evidence="1">2.1.1.201</ecNumber>
    </recommendedName>
    <alternativeName>
        <fullName evidence="1">2-methoxy-6-polyprenyl-1,4-benzoquinol methylase</fullName>
    </alternativeName>
    <alternativeName>
        <fullName evidence="1">Demethylmenaquinone methyltransferase</fullName>
    </alternativeName>
</protein>
<name>UBIE_AGRFC</name>